<gene>
    <name type="ordered locus">SAUSA300_0100</name>
</gene>
<reference key="1">
    <citation type="journal article" date="2006" name="Lancet">
        <title>Complete genome sequence of USA300, an epidemic clone of community-acquired meticillin-resistant Staphylococcus aureus.</title>
        <authorList>
            <person name="Diep B.A."/>
            <person name="Gill S.R."/>
            <person name="Chang R.F."/>
            <person name="Phan T.H."/>
            <person name="Chen J.H."/>
            <person name="Davidson M.G."/>
            <person name="Lin F."/>
            <person name="Lin J."/>
            <person name="Carleton H.A."/>
            <person name="Mongodin E.F."/>
            <person name="Sensabaugh G.F."/>
            <person name="Perdreau-Remington F."/>
        </authorList>
    </citation>
    <scope>NUCLEOTIDE SEQUENCE [LARGE SCALE GENOMIC DNA]</scope>
    <source>
        <strain>USA300</strain>
    </source>
</reference>
<feature type="signal peptide" evidence="1">
    <location>
        <begin position="1"/>
        <end position="23"/>
    </location>
</feature>
<feature type="chain" id="PRO_0000282068" description="Uncharacterized lipoprotein SAUSA300_0100">
    <location>
        <begin position="24"/>
        <end position="255"/>
    </location>
</feature>
<feature type="lipid moiety-binding region" description="N-palmitoyl cysteine" evidence="1">
    <location>
        <position position="24"/>
    </location>
</feature>
<feature type="lipid moiety-binding region" description="S-diacylglycerol cysteine" evidence="1">
    <location>
        <position position="24"/>
    </location>
</feature>
<accession>Q2FKG1</accession>
<name>Y100_STAA3</name>
<evidence type="ECO:0000255" key="1">
    <source>
        <dbReference type="PROSITE-ProRule" id="PRU00303"/>
    </source>
</evidence>
<evidence type="ECO:0000305" key="2"/>
<sequence>MKRLNKLVLGIIFLFLVISITAGCGIGKEAEVKKSFEKTLSMYPIKNLEDLYDKEGYRDDQFDKNDKGTWIINSEMVIQPNNEDMVAKGMVLYMNRNTKTTNGYYYVDVTKDEDEGKPHDNEKRYPVKMVDNKIIPTKEIKDEKIKKEIENFKFFVQYGDFKNLKNYKDGDISYNPEVPSYSAKYQLTNDDYNVKQLRKRYDIPTSKAPKLLLKGSGNLKGSSVGYKDIEFTFVEKKEENIYFSDSLDYKKSGDV</sequence>
<comment type="subcellular location">
    <subcellularLocation>
        <location evidence="1">Cell membrane</location>
        <topology evidence="1">Lipid-anchor</topology>
    </subcellularLocation>
</comment>
<comment type="similarity">
    <text evidence="2">Belongs to the staphylococcal tandem lipoprotein family.</text>
</comment>
<comment type="sequence caution" evidence="2">
    <conflict type="erroneous initiation">
        <sequence resource="EMBL-CDS" id="ABD22028"/>
    </conflict>
</comment>
<keyword id="KW-1003">Cell membrane</keyword>
<keyword id="KW-0449">Lipoprotein</keyword>
<keyword id="KW-0472">Membrane</keyword>
<keyword id="KW-0564">Palmitate</keyword>
<keyword id="KW-0732">Signal</keyword>
<dbReference type="EMBL" id="CP000255">
    <property type="protein sequence ID" value="ABD22028.1"/>
    <property type="status" value="ALT_INIT"/>
    <property type="molecule type" value="Genomic_DNA"/>
</dbReference>
<dbReference type="SMR" id="Q2FKG1"/>
<dbReference type="KEGG" id="saa:SAUSA300_0100"/>
<dbReference type="HOGENOM" id="CLU_071589_0_1_9"/>
<dbReference type="OMA" id="QYANFND"/>
<dbReference type="Proteomes" id="UP000001939">
    <property type="component" value="Chromosome"/>
</dbReference>
<dbReference type="GO" id="GO:0005886">
    <property type="term" value="C:plasma membrane"/>
    <property type="evidence" value="ECO:0007669"/>
    <property type="project" value="UniProtKB-SubCell"/>
</dbReference>
<dbReference type="Gene3D" id="2.50.20.40">
    <property type="match status" value="1"/>
</dbReference>
<dbReference type="InterPro" id="IPR007595">
    <property type="entry name" value="Csa"/>
</dbReference>
<dbReference type="InterPro" id="IPR038641">
    <property type="entry name" value="Csa_sf"/>
</dbReference>
<dbReference type="NCBIfam" id="TIGR01742">
    <property type="entry name" value="SA_tandem_lipo"/>
    <property type="match status" value="1"/>
</dbReference>
<dbReference type="Pfam" id="PF04507">
    <property type="entry name" value="DUF576"/>
    <property type="match status" value="1"/>
</dbReference>
<dbReference type="PROSITE" id="PS51257">
    <property type="entry name" value="PROKAR_LIPOPROTEIN"/>
    <property type="match status" value="1"/>
</dbReference>
<organism>
    <name type="scientific">Staphylococcus aureus (strain USA300)</name>
    <dbReference type="NCBI Taxonomy" id="367830"/>
    <lineage>
        <taxon>Bacteria</taxon>
        <taxon>Bacillati</taxon>
        <taxon>Bacillota</taxon>
        <taxon>Bacilli</taxon>
        <taxon>Bacillales</taxon>
        <taxon>Staphylococcaceae</taxon>
        <taxon>Staphylococcus</taxon>
    </lineage>
</organism>
<proteinExistence type="inferred from homology"/>
<protein>
    <recommendedName>
        <fullName>Uncharacterized lipoprotein SAUSA300_0100</fullName>
    </recommendedName>
</protein>